<accession>Q74L90</accession>
<dbReference type="EMBL" id="AE017198">
    <property type="protein sequence ID" value="AAS08323.1"/>
    <property type="molecule type" value="Genomic_DNA"/>
</dbReference>
<dbReference type="RefSeq" id="WP_011161520.1">
    <property type="nucleotide sequence ID" value="NC_005362.1"/>
</dbReference>
<dbReference type="SMR" id="Q74L90"/>
<dbReference type="GeneID" id="83569752"/>
<dbReference type="KEGG" id="ljo:LJ_0337"/>
<dbReference type="PATRIC" id="fig|257314.6.peg.355"/>
<dbReference type="eggNOG" id="COG0480">
    <property type="taxonomic scope" value="Bacteria"/>
</dbReference>
<dbReference type="HOGENOM" id="CLU_002794_4_1_9"/>
<dbReference type="Proteomes" id="UP000000581">
    <property type="component" value="Chromosome"/>
</dbReference>
<dbReference type="GO" id="GO:0005737">
    <property type="term" value="C:cytoplasm"/>
    <property type="evidence" value="ECO:0007669"/>
    <property type="project" value="UniProtKB-SubCell"/>
</dbReference>
<dbReference type="GO" id="GO:0005525">
    <property type="term" value="F:GTP binding"/>
    <property type="evidence" value="ECO:0007669"/>
    <property type="project" value="UniProtKB-UniRule"/>
</dbReference>
<dbReference type="GO" id="GO:0003924">
    <property type="term" value="F:GTPase activity"/>
    <property type="evidence" value="ECO:0007669"/>
    <property type="project" value="InterPro"/>
</dbReference>
<dbReference type="GO" id="GO:0003746">
    <property type="term" value="F:translation elongation factor activity"/>
    <property type="evidence" value="ECO:0007669"/>
    <property type="project" value="UniProtKB-UniRule"/>
</dbReference>
<dbReference type="GO" id="GO:0032790">
    <property type="term" value="P:ribosome disassembly"/>
    <property type="evidence" value="ECO:0007669"/>
    <property type="project" value="TreeGrafter"/>
</dbReference>
<dbReference type="CDD" id="cd01886">
    <property type="entry name" value="EF-G"/>
    <property type="match status" value="1"/>
</dbReference>
<dbReference type="CDD" id="cd16262">
    <property type="entry name" value="EFG_III"/>
    <property type="match status" value="1"/>
</dbReference>
<dbReference type="CDD" id="cd01434">
    <property type="entry name" value="EFG_mtEFG1_IV"/>
    <property type="match status" value="1"/>
</dbReference>
<dbReference type="CDD" id="cd03713">
    <property type="entry name" value="EFG_mtEFG_C"/>
    <property type="match status" value="1"/>
</dbReference>
<dbReference type="CDD" id="cd04088">
    <property type="entry name" value="EFG_mtEFG_II"/>
    <property type="match status" value="1"/>
</dbReference>
<dbReference type="FunFam" id="2.40.30.10:FF:000006">
    <property type="entry name" value="Elongation factor G"/>
    <property type="match status" value="1"/>
</dbReference>
<dbReference type="FunFam" id="3.30.230.10:FF:000003">
    <property type="entry name" value="Elongation factor G"/>
    <property type="match status" value="1"/>
</dbReference>
<dbReference type="FunFam" id="3.30.70.240:FF:000001">
    <property type="entry name" value="Elongation factor G"/>
    <property type="match status" value="1"/>
</dbReference>
<dbReference type="FunFam" id="3.30.70.870:FF:000001">
    <property type="entry name" value="Elongation factor G"/>
    <property type="match status" value="1"/>
</dbReference>
<dbReference type="FunFam" id="3.40.50.300:FF:000029">
    <property type="entry name" value="Elongation factor G"/>
    <property type="match status" value="1"/>
</dbReference>
<dbReference type="Gene3D" id="3.30.230.10">
    <property type="match status" value="1"/>
</dbReference>
<dbReference type="Gene3D" id="3.30.70.240">
    <property type="match status" value="1"/>
</dbReference>
<dbReference type="Gene3D" id="3.30.70.870">
    <property type="entry name" value="Elongation Factor G (Translational Gtpase), domain 3"/>
    <property type="match status" value="1"/>
</dbReference>
<dbReference type="Gene3D" id="3.40.50.300">
    <property type="entry name" value="P-loop containing nucleotide triphosphate hydrolases"/>
    <property type="match status" value="1"/>
</dbReference>
<dbReference type="Gene3D" id="2.40.30.10">
    <property type="entry name" value="Translation factors"/>
    <property type="match status" value="1"/>
</dbReference>
<dbReference type="HAMAP" id="MF_00054_B">
    <property type="entry name" value="EF_G_EF_2_B"/>
    <property type="match status" value="1"/>
</dbReference>
<dbReference type="InterPro" id="IPR053905">
    <property type="entry name" value="EF-G-like_DII"/>
</dbReference>
<dbReference type="InterPro" id="IPR041095">
    <property type="entry name" value="EFG_II"/>
</dbReference>
<dbReference type="InterPro" id="IPR009022">
    <property type="entry name" value="EFG_III"/>
</dbReference>
<dbReference type="InterPro" id="IPR035647">
    <property type="entry name" value="EFG_III/V"/>
</dbReference>
<dbReference type="InterPro" id="IPR047872">
    <property type="entry name" value="EFG_IV"/>
</dbReference>
<dbReference type="InterPro" id="IPR035649">
    <property type="entry name" value="EFG_V"/>
</dbReference>
<dbReference type="InterPro" id="IPR000640">
    <property type="entry name" value="EFG_V-like"/>
</dbReference>
<dbReference type="InterPro" id="IPR031157">
    <property type="entry name" value="G_TR_CS"/>
</dbReference>
<dbReference type="InterPro" id="IPR027417">
    <property type="entry name" value="P-loop_NTPase"/>
</dbReference>
<dbReference type="InterPro" id="IPR020568">
    <property type="entry name" value="Ribosomal_Su5_D2-typ_SF"/>
</dbReference>
<dbReference type="InterPro" id="IPR014721">
    <property type="entry name" value="Ribsml_uS5_D2-typ_fold_subgr"/>
</dbReference>
<dbReference type="InterPro" id="IPR005225">
    <property type="entry name" value="Small_GTP-bd"/>
</dbReference>
<dbReference type="InterPro" id="IPR000795">
    <property type="entry name" value="T_Tr_GTP-bd_dom"/>
</dbReference>
<dbReference type="InterPro" id="IPR009000">
    <property type="entry name" value="Transl_B-barrel_sf"/>
</dbReference>
<dbReference type="InterPro" id="IPR004540">
    <property type="entry name" value="Transl_elong_EFG/EF2"/>
</dbReference>
<dbReference type="InterPro" id="IPR005517">
    <property type="entry name" value="Transl_elong_EFG/EF2_IV"/>
</dbReference>
<dbReference type="NCBIfam" id="TIGR00484">
    <property type="entry name" value="EF-G"/>
    <property type="match status" value="1"/>
</dbReference>
<dbReference type="NCBIfam" id="NF009379">
    <property type="entry name" value="PRK12740.1-3"/>
    <property type="match status" value="1"/>
</dbReference>
<dbReference type="NCBIfam" id="NF009381">
    <property type="entry name" value="PRK12740.1-5"/>
    <property type="match status" value="1"/>
</dbReference>
<dbReference type="NCBIfam" id="TIGR00231">
    <property type="entry name" value="small_GTP"/>
    <property type="match status" value="1"/>
</dbReference>
<dbReference type="PANTHER" id="PTHR43261:SF1">
    <property type="entry name" value="RIBOSOME-RELEASING FACTOR 2, MITOCHONDRIAL"/>
    <property type="match status" value="1"/>
</dbReference>
<dbReference type="PANTHER" id="PTHR43261">
    <property type="entry name" value="TRANSLATION ELONGATION FACTOR G-RELATED"/>
    <property type="match status" value="1"/>
</dbReference>
<dbReference type="Pfam" id="PF22042">
    <property type="entry name" value="EF-G_D2"/>
    <property type="match status" value="1"/>
</dbReference>
<dbReference type="Pfam" id="PF00679">
    <property type="entry name" value="EFG_C"/>
    <property type="match status" value="1"/>
</dbReference>
<dbReference type="Pfam" id="PF14492">
    <property type="entry name" value="EFG_III"/>
    <property type="match status" value="1"/>
</dbReference>
<dbReference type="Pfam" id="PF03764">
    <property type="entry name" value="EFG_IV"/>
    <property type="match status" value="1"/>
</dbReference>
<dbReference type="Pfam" id="PF00009">
    <property type="entry name" value="GTP_EFTU"/>
    <property type="match status" value="1"/>
</dbReference>
<dbReference type="PRINTS" id="PR00315">
    <property type="entry name" value="ELONGATNFCT"/>
</dbReference>
<dbReference type="SMART" id="SM00838">
    <property type="entry name" value="EFG_C"/>
    <property type="match status" value="1"/>
</dbReference>
<dbReference type="SMART" id="SM00889">
    <property type="entry name" value="EFG_IV"/>
    <property type="match status" value="1"/>
</dbReference>
<dbReference type="SUPFAM" id="SSF54980">
    <property type="entry name" value="EF-G C-terminal domain-like"/>
    <property type="match status" value="2"/>
</dbReference>
<dbReference type="SUPFAM" id="SSF52540">
    <property type="entry name" value="P-loop containing nucleoside triphosphate hydrolases"/>
    <property type="match status" value="1"/>
</dbReference>
<dbReference type="SUPFAM" id="SSF54211">
    <property type="entry name" value="Ribosomal protein S5 domain 2-like"/>
    <property type="match status" value="1"/>
</dbReference>
<dbReference type="SUPFAM" id="SSF50447">
    <property type="entry name" value="Translation proteins"/>
    <property type="match status" value="1"/>
</dbReference>
<dbReference type="PROSITE" id="PS00301">
    <property type="entry name" value="G_TR_1"/>
    <property type="match status" value="1"/>
</dbReference>
<dbReference type="PROSITE" id="PS51722">
    <property type="entry name" value="G_TR_2"/>
    <property type="match status" value="1"/>
</dbReference>
<protein>
    <recommendedName>
        <fullName evidence="1">Elongation factor G</fullName>
        <shortName evidence="1">EF-G</shortName>
    </recommendedName>
</protein>
<feature type="chain" id="PRO_0000091137" description="Elongation factor G">
    <location>
        <begin position="1"/>
        <end position="698"/>
    </location>
</feature>
<feature type="domain" description="tr-type G">
    <location>
        <begin position="10"/>
        <end position="285"/>
    </location>
</feature>
<feature type="binding site" evidence="1">
    <location>
        <begin position="19"/>
        <end position="26"/>
    </location>
    <ligand>
        <name>GTP</name>
        <dbReference type="ChEBI" id="CHEBI:37565"/>
    </ligand>
</feature>
<feature type="binding site" evidence="1">
    <location>
        <begin position="83"/>
        <end position="87"/>
    </location>
    <ligand>
        <name>GTP</name>
        <dbReference type="ChEBI" id="CHEBI:37565"/>
    </ligand>
</feature>
<feature type="binding site" evidence="1">
    <location>
        <begin position="137"/>
        <end position="140"/>
    </location>
    <ligand>
        <name>GTP</name>
        <dbReference type="ChEBI" id="CHEBI:37565"/>
    </ligand>
</feature>
<comment type="function">
    <text evidence="1">Catalyzes the GTP-dependent ribosomal translocation step during translation elongation. During this step, the ribosome changes from the pre-translocational (PRE) to the post-translocational (POST) state as the newly formed A-site-bound peptidyl-tRNA and P-site-bound deacylated tRNA move to the P and E sites, respectively. Catalyzes the coordinated movement of the two tRNA molecules, the mRNA and conformational changes in the ribosome.</text>
</comment>
<comment type="subcellular location">
    <subcellularLocation>
        <location evidence="1">Cytoplasm</location>
    </subcellularLocation>
</comment>
<comment type="similarity">
    <text evidence="1">Belongs to the TRAFAC class translation factor GTPase superfamily. Classic translation factor GTPase family. EF-G/EF-2 subfamily.</text>
</comment>
<name>EFG_LACJO</name>
<proteinExistence type="inferred from homology"/>
<sequence length="698" mass="76917">MANKREFPLDKTRNIGIMAHIDAGKTTTTERILYYTGKIHKIGETHEGDSQMDWMEEEKERGITITSAATTAQWKDYRINIIDTPGHVDFTIEVERSLRVLDGAVTVLDAQAGVEPQTENVWRQAETYGVPRIVFVNKMDKIGADFDKSVKSLHERLNANAQAVQMPIGSADTFEGVIDLINMVADVYDEDKLGSKWDTIPVPDEYKEEALKRRNELIEAVADVDDGIMDKYLGGEEISNDELKAAIRKATLNLEFFPVYAGSAFKNKGVQMMLDGVVDYLPSPLDVKPYVAHDPKTGDEVELMADDKKPFAALAFKIATDPFVGRLTFIRVYTGSLQSGSYVLNASKNSRERVGRLLQMHANSRTEISEVFSGDIAGAIGLKNTTTGDSLTDPAHPLILESLQVPDPVIQVSVEPKSKADRDKMDVALQKLTEEDPTFRAETNPETGQTLISGMGELHLDIMVERMKREFNVEATIGEPQVAYRETFTKEAKAQGKFVRQSGGKGQYGDVWIEFTPNEEGKGYEFEDAIVGGVVPREFIPSVDQGLQEAMKNGVLAGYPLIDVKAKLYDGSYHEVDSSEAAFKVAASLALRNAASKAGAVILEPIMKVQVTTPEEYLGDVMGSITARRGSMEGMEDRAGAKVINSFVPLSEMFGYATTLRSSTQGRGTFTMVFDHYSPTPKSIQADIIKKRGGEDAE</sequence>
<organism>
    <name type="scientific">Lactobacillus johnsonii (strain CNCM I-12250 / La1 / NCC 533)</name>
    <dbReference type="NCBI Taxonomy" id="257314"/>
    <lineage>
        <taxon>Bacteria</taxon>
        <taxon>Bacillati</taxon>
        <taxon>Bacillota</taxon>
        <taxon>Bacilli</taxon>
        <taxon>Lactobacillales</taxon>
        <taxon>Lactobacillaceae</taxon>
        <taxon>Lactobacillus</taxon>
    </lineage>
</organism>
<keyword id="KW-0963">Cytoplasm</keyword>
<keyword id="KW-0251">Elongation factor</keyword>
<keyword id="KW-0342">GTP-binding</keyword>
<keyword id="KW-0547">Nucleotide-binding</keyword>
<keyword id="KW-0648">Protein biosynthesis</keyword>
<evidence type="ECO:0000255" key="1">
    <source>
        <dbReference type="HAMAP-Rule" id="MF_00054"/>
    </source>
</evidence>
<reference key="1">
    <citation type="journal article" date="2004" name="Proc. Natl. Acad. Sci. U.S.A.">
        <title>The genome sequence of the probiotic intestinal bacterium Lactobacillus johnsonii NCC 533.</title>
        <authorList>
            <person name="Pridmore R.D."/>
            <person name="Berger B."/>
            <person name="Desiere F."/>
            <person name="Vilanova D."/>
            <person name="Barretto C."/>
            <person name="Pittet A.-C."/>
            <person name="Zwahlen M.-C."/>
            <person name="Rouvet M."/>
            <person name="Altermann E."/>
            <person name="Barrangou R."/>
            <person name="Mollet B."/>
            <person name="Mercenier A."/>
            <person name="Klaenhammer T."/>
            <person name="Arigoni F."/>
            <person name="Schell M.A."/>
        </authorList>
    </citation>
    <scope>NUCLEOTIDE SEQUENCE [LARGE SCALE GENOMIC DNA]</scope>
    <source>
        <strain>CNCM I-1225 / La1 / NCC 533</strain>
    </source>
</reference>
<gene>
    <name evidence="1" type="primary">fusA</name>
    <name type="ordered locus">LJ_0337</name>
</gene>